<evidence type="ECO:0000250" key="1"/>
<evidence type="ECO:0000250" key="2">
    <source>
        <dbReference type="UniProtKB" id="P06744"/>
    </source>
</evidence>
<evidence type="ECO:0000250" key="3">
    <source>
        <dbReference type="UniProtKB" id="P06745"/>
    </source>
</evidence>
<evidence type="ECO:0000269" key="4">
    <source>
    </source>
</evidence>
<evidence type="ECO:0000269" key="5">
    <source>
    </source>
</evidence>
<evidence type="ECO:0000305" key="6"/>
<evidence type="ECO:0000312" key="7">
    <source>
        <dbReference type="EMBL" id="AAH62005.1"/>
    </source>
</evidence>
<evidence type="ECO:0000312" key="8">
    <source>
        <dbReference type="RGD" id="2727"/>
    </source>
</evidence>
<evidence type="ECO:0007744" key="9">
    <source>
    </source>
</evidence>
<accession>Q6P6V0</accession>
<sequence>MAALTRNPEFQKLLEWHRANSANLKLRELFEADPERFNHFSLNLNTNHGHILLDYSKNLVNKEVLHMLVDLAKSRGVEAARDNMFSGLKINSTEDRAVLHVALRNRSNRSIMMDGKDVMPEVNKVLDKMKSFCQRVRSGDWKGYTGKAITDIINIGIGGSDLGPLMVTEALKPYSKGGPRVWFVSNIDGTHIAKTLANLNPESSLFIIASKTFTTQETITNAETAKEWFLQAAKDPSAVAKHFVALSTNTDKVKEFGIDPKNMFEFWDWVGGRYSLWSAIGLSIALHVGFDHFEQLLSGAHWMDQHFMKTPLDKNAPVLLALLGIWYINFYGCETHAMLPYDQYMHRFAAYFQQGDMESNGKYITKSGARVDYQTGPIVWGEPGTNGQHAFYQLIHQGTKMIPCDFLIPVQTQHPIRNGLHHKILLANFLAQTEALMKGKSPEEARKELQAAGKSPEELEKLLPHKVFEGNRPTNSIVFTKLTPFILGALIAMYEHKIFVQGIIWDINSFDQWGVELGKQLAKKIEPELDGSSAVTSHDSSTNGLIGFIKLQRDTKID</sequence>
<feature type="initiator methionine" description="Removed" evidence="2">
    <location>
        <position position="1"/>
    </location>
</feature>
<feature type="chain" id="PRO_0000349123" description="Glucose-6-phosphate isomerase" evidence="2">
    <location>
        <begin position="2"/>
        <end position="558"/>
    </location>
</feature>
<feature type="active site" description="Proton donor" evidence="3">
    <location>
        <position position="358"/>
    </location>
</feature>
<feature type="active site" evidence="3">
    <location>
        <position position="389"/>
    </location>
</feature>
<feature type="active site" evidence="3">
    <location>
        <position position="519"/>
    </location>
</feature>
<feature type="binding site" evidence="3">
    <location>
        <begin position="159"/>
        <end position="160"/>
    </location>
    <ligand>
        <name>D-glucose 6-phosphate</name>
        <dbReference type="ChEBI" id="CHEBI:61548"/>
    </ligand>
</feature>
<feature type="binding site" evidence="3">
    <location>
        <begin position="210"/>
        <end position="215"/>
    </location>
    <ligand>
        <name>D-glucose 6-phosphate</name>
        <dbReference type="ChEBI" id="CHEBI:61548"/>
    </ligand>
</feature>
<feature type="binding site" evidence="3">
    <location>
        <position position="354"/>
    </location>
    <ligand>
        <name>D-glucose 6-phosphate</name>
        <dbReference type="ChEBI" id="CHEBI:61548"/>
    </ligand>
</feature>
<feature type="binding site" evidence="3">
    <location>
        <position position="358"/>
    </location>
    <ligand>
        <name>D-glucose 6-phosphate</name>
        <dbReference type="ChEBI" id="CHEBI:61548"/>
    </ligand>
</feature>
<feature type="binding site" evidence="3">
    <location>
        <position position="389"/>
    </location>
    <ligand>
        <name>D-glucose 6-phosphate</name>
        <dbReference type="ChEBI" id="CHEBI:61548"/>
    </ligand>
</feature>
<feature type="binding site" evidence="3">
    <location>
        <position position="519"/>
    </location>
    <ligand>
        <name>D-glucose 6-phosphate</name>
        <dbReference type="ChEBI" id="CHEBI:61548"/>
    </ligand>
</feature>
<feature type="modified residue" description="N-acetylalanine" evidence="2">
    <location>
        <position position="2"/>
    </location>
</feature>
<feature type="modified residue" description="N6-acetyllysine" evidence="2">
    <location>
        <position position="12"/>
    </location>
</feature>
<feature type="modified residue" description="Phosphoserine" evidence="9">
    <location>
        <position position="86"/>
    </location>
</feature>
<feature type="modified residue" description="Phosphoserine" evidence="2">
    <location>
        <position position="107"/>
    </location>
</feature>
<feature type="modified residue" description="N6-acetyllysine" evidence="2">
    <location>
        <position position="142"/>
    </location>
</feature>
<feature type="modified residue" description="Phosphoserine; by CK2" evidence="2">
    <location>
        <position position="185"/>
    </location>
</feature>
<feature type="modified residue" description="Phosphothreonine" evidence="9">
    <location>
        <position position="250"/>
    </location>
</feature>
<feature type="modified residue" description="N6-acetyllysine; alternate" evidence="3">
    <location>
        <position position="454"/>
    </location>
</feature>
<feature type="modified residue" description="N6-malonyllysine; alternate" evidence="1">
    <location>
        <position position="454"/>
    </location>
</feature>
<feature type="modified residue" description="N6-succinyllysine; alternate" evidence="3">
    <location>
        <position position="454"/>
    </location>
</feature>
<feature type="modified residue" description="Phosphoserine" evidence="9">
    <location>
        <position position="455"/>
    </location>
</feature>
<reference evidence="7" key="1">
    <citation type="journal article" date="2004" name="Genome Res.">
        <title>The status, quality, and expansion of the NIH full-length cDNA project: the Mammalian Gene Collection (MGC).</title>
        <authorList>
            <consortium name="The MGC Project Team"/>
        </authorList>
    </citation>
    <scope>NUCLEOTIDE SEQUENCE [LARGE SCALE MRNA]</scope>
    <source>
        <tissue evidence="7">Prostate</tissue>
    </source>
</reference>
<reference key="2">
    <citation type="journal article" date="1989" name="J. Neurochem.">
        <title>Effect of 6-phosphogluconate on phosphoglucose isomerase in rat brain in vitro and in vivo.</title>
        <authorList>
            <person name="Gaitonde M.K."/>
            <person name="Murray E."/>
            <person name="Cunningham V.J."/>
        </authorList>
    </citation>
    <scope>FUNCTION</scope>
    <scope>CATALYTIC ACTIVITY</scope>
    <scope>PATHWAY</scope>
    <scope>BIOPHYSICOCHEMICAL PROPERTIES</scope>
</reference>
<reference key="3">
    <citation type="journal article" date="2009" name="Proteomics">
        <title>Proteome profile of the mature rat olfactory bulb.</title>
        <authorList>
            <person name="Maurya D.K."/>
            <person name="Sundaram C.S."/>
            <person name="Bhargava P."/>
        </authorList>
    </citation>
    <scope>IDENTIFICATION BY MASS SPECTROMETRY</scope>
    <scope>SUBCELLULAR LOCATION</scope>
</reference>
<reference key="4">
    <citation type="journal article" date="2012" name="Nat. Commun.">
        <title>Quantitative maps of protein phosphorylation sites across 14 different rat organs and tissues.</title>
        <authorList>
            <person name="Lundby A."/>
            <person name="Secher A."/>
            <person name="Lage K."/>
            <person name="Nordsborg N.B."/>
            <person name="Dmytriyev A."/>
            <person name="Lundby C."/>
            <person name="Olsen J.V."/>
        </authorList>
    </citation>
    <scope>PHOSPHORYLATION [LARGE SCALE ANALYSIS] AT SER-86; THR-250 AND SER-455</scope>
    <scope>IDENTIFICATION BY MASS SPECTROMETRY [LARGE SCALE ANALYSIS]</scope>
</reference>
<organism>
    <name type="scientific">Rattus norvegicus</name>
    <name type="common">Rat</name>
    <dbReference type="NCBI Taxonomy" id="10116"/>
    <lineage>
        <taxon>Eukaryota</taxon>
        <taxon>Metazoa</taxon>
        <taxon>Chordata</taxon>
        <taxon>Craniata</taxon>
        <taxon>Vertebrata</taxon>
        <taxon>Euteleostomi</taxon>
        <taxon>Mammalia</taxon>
        <taxon>Eutheria</taxon>
        <taxon>Euarchontoglires</taxon>
        <taxon>Glires</taxon>
        <taxon>Rodentia</taxon>
        <taxon>Myomorpha</taxon>
        <taxon>Muroidea</taxon>
        <taxon>Muridae</taxon>
        <taxon>Murinae</taxon>
        <taxon>Rattus</taxon>
    </lineage>
</organism>
<gene>
    <name evidence="8" type="primary">Gpi</name>
</gene>
<keyword id="KW-0007">Acetylation</keyword>
<keyword id="KW-0202">Cytokine</keyword>
<keyword id="KW-0963">Cytoplasm</keyword>
<keyword id="KW-0312">Gluconeogenesis</keyword>
<keyword id="KW-0324">Glycolysis</keyword>
<keyword id="KW-0339">Growth factor</keyword>
<keyword id="KW-0413">Isomerase</keyword>
<keyword id="KW-0597">Phosphoprotein</keyword>
<keyword id="KW-1185">Reference proteome</keyword>
<keyword id="KW-0964">Secreted</keyword>
<keyword id="KW-0832">Ubl conjugation</keyword>
<comment type="function">
    <text evidence="2 5">In the cytoplasm, catalyzes the conversion of glucose-6-phosphate to fructose-6-phosphate, the second step in glycolysis, and the reverse reaction during gluconeogenesis (PubMed:2709006). Besides it's role as a glycolytic enzyme, also acts as a secreted cytokine: acts as an angiogenic factor (AMF) that stimulates endothelial cell motility. Acts as a neurotrophic factor, neuroleukin, for spinal and sensory neurons. It is secreted by lectin-stimulated T-cells and induces immunoglobulin secretion (By similarity).</text>
</comment>
<comment type="catalytic activity">
    <reaction evidence="5">
        <text>alpha-D-glucose 6-phosphate = beta-D-fructose 6-phosphate</text>
        <dbReference type="Rhea" id="RHEA:11816"/>
        <dbReference type="ChEBI" id="CHEBI:57634"/>
        <dbReference type="ChEBI" id="CHEBI:58225"/>
        <dbReference type="EC" id="5.3.1.9"/>
    </reaction>
</comment>
<comment type="biophysicochemical properties">
    <kinetics>
        <KM evidence="5">0.593 mM for glucose-6-phosphate</KM>
        <KM evidence="5">0.095 mM for fructose-6-phosphate</KM>
        <Vmax evidence="5">2.291 nmol/min/mg enzyme with glucose-6-phosphate as substrate</Vmax>
        <Vmax evidence="5">98.0 nmol/min/mg enzyme with fructose-6-phosphate as substrate</Vmax>
    </kinetics>
</comment>
<comment type="pathway">
    <text evidence="5">Carbohydrate degradation; glycolysis; D-glyceraldehyde 3-phosphate and glycerone phosphate from D-glucose: step 2/4.</text>
</comment>
<comment type="subunit">
    <text evidence="2">Homodimer; in the catalytically active form. Monomer in the secreted form.</text>
</comment>
<comment type="subcellular location">
    <subcellularLocation>
        <location evidence="4">Cytoplasm</location>
    </subcellularLocation>
    <subcellularLocation>
        <location evidence="2">Secreted</location>
    </subcellularLocation>
</comment>
<comment type="PTM">
    <text evidence="2">Phosphorylation at Ser-185 by CK2 has been shown to decrease enzymatic activity and may contribute to secretion by a non-classical secretory pathway.</text>
</comment>
<comment type="PTM">
    <text evidence="2">ISGylated.</text>
</comment>
<comment type="similarity">
    <text evidence="6">Belongs to the GPI family.</text>
</comment>
<protein>
    <recommendedName>
        <fullName evidence="3">Glucose-6-phosphate isomerase</fullName>
        <shortName evidence="3">GPI</shortName>
        <ecNumber evidence="5">5.3.1.9</ecNumber>
    </recommendedName>
    <alternativeName>
        <fullName evidence="2">Autocrine motility factor</fullName>
        <shortName evidence="2">AMF</shortName>
    </alternativeName>
    <alternativeName>
        <fullName evidence="3">Neuroleukin</fullName>
        <shortName evidence="3">NLK</shortName>
    </alternativeName>
    <alternativeName>
        <fullName evidence="3">Phosphoglucose isomerase</fullName>
        <shortName evidence="3">PGI</shortName>
    </alternativeName>
    <alternativeName>
        <fullName evidence="3">Phosphohexose isomerase</fullName>
        <shortName evidence="3">PHI</shortName>
    </alternativeName>
</protein>
<name>G6PI_RAT</name>
<proteinExistence type="evidence at protein level"/>
<dbReference type="EC" id="5.3.1.9" evidence="5"/>
<dbReference type="EMBL" id="BC062005">
    <property type="protein sequence ID" value="AAH62005.1"/>
    <property type="molecule type" value="mRNA"/>
</dbReference>
<dbReference type="RefSeq" id="NP_997475.1">
    <property type="nucleotide sequence ID" value="NM_207592.1"/>
</dbReference>
<dbReference type="RefSeq" id="XP_063139755.1">
    <property type="nucleotide sequence ID" value="XM_063283685.1"/>
</dbReference>
<dbReference type="RefSeq" id="XP_063139761.1">
    <property type="nucleotide sequence ID" value="XM_063283691.1"/>
</dbReference>
<dbReference type="SMR" id="Q6P6V0"/>
<dbReference type="BioGRID" id="253982">
    <property type="interactions" value="2"/>
</dbReference>
<dbReference type="FunCoup" id="Q6P6V0">
    <property type="interactions" value="2444"/>
</dbReference>
<dbReference type="IntAct" id="Q6P6V0">
    <property type="interactions" value="11"/>
</dbReference>
<dbReference type="STRING" id="10116.ENSRNOP00000029515"/>
<dbReference type="iPTMnet" id="Q6P6V0"/>
<dbReference type="PhosphoSitePlus" id="Q6P6V0"/>
<dbReference type="SwissPalm" id="Q6P6V0"/>
<dbReference type="jPOST" id="Q6P6V0"/>
<dbReference type="PaxDb" id="10116-ENSRNOP00000029515"/>
<dbReference type="Ensembl" id="ENSRNOT00000032613.5">
    <property type="protein sequence ID" value="ENSRNOP00000029515.3"/>
    <property type="gene ID" value="ENSRNOG00000023150.6"/>
</dbReference>
<dbReference type="Ensembl" id="ENSRNOT00000097410.1">
    <property type="protein sequence ID" value="ENSRNOP00000087782.1"/>
    <property type="gene ID" value="ENSRNOG00000023150.6"/>
</dbReference>
<dbReference type="GeneID" id="292804"/>
<dbReference type="KEGG" id="rno:292804"/>
<dbReference type="UCSC" id="RGD:2727">
    <property type="organism name" value="rat"/>
</dbReference>
<dbReference type="AGR" id="RGD:2727"/>
<dbReference type="CTD" id="2821"/>
<dbReference type="RGD" id="2727">
    <property type="gene designation" value="Gpi"/>
</dbReference>
<dbReference type="eggNOG" id="KOG2446">
    <property type="taxonomic scope" value="Eukaryota"/>
</dbReference>
<dbReference type="GeneTree" id="ENSGT00390000000707"/>
<dbReference type="HOGENOM" id="CLU_017947_3_0_1"/>
<dbReference type="InParanoid" id="Q6P6V0"/>
<dbReference type="OMA" id="DWYRQLW"/>
<dbReference type="OrthoDB" id="5831190at2759"/>
<dbReference type="PhylomeDB" id="Q6P6V0"/>
<dbReference type="TreeFam" id="TF300436"/>
<dbReference type="Reactome" id="R-RNO-5628897">
    <property type="pathway name" value="TP53 Regulates Metabolic Genes"/>
</dbReference>
<dbReference type="Reactome" id="R-RNO-6798695">
    <property type="pathway name" value="Neutrophil degranulation"/>
</dbReference>
<dbReference type="Reactome" id="R-RNO-70171">
    <property type="pathway name" value="Glycolysis"/>
</dbReference>
<dbReference type="Reactome" id="R-RNO-70263">
    <property type="pathway name" value="Gluconeogenesis"/>
</dbReference>
<dbReference type="SABIO-RK" id="Q6P6V0"/>
<dbReference type="UniPathway" id="UPA00109">
    <property type="reaction ID" value="UER00181"/>
</dbReference>
<dbReference type="PRO" id="PR:Q6P6V0"/>
<dbReference type="Proteomes" id="UP000002494">
    <property type="component" value="Chromosome 1"/>
</dbReference>
<dbReference type="Bgee" id="ENSRNOG00000023150">
    <property type="expression patterns" value="Expressed in skeletal muscle tissue and 19 other cell types or tissues"/>
</dbReference>
<dbReference type="GO" id="GO:0060170">
    <property type="term" value="C:ciliary membrane"/>
    <property type="evidence" value="ECO:0000266"/>
    <property type="project" value="RGD"/>
</dbReference>
<dbReference type="GO" id="GO:0005829">
    <property type="term" value="C:cytosol"/>
    <property type="evidence" value="ECO:0000266"/>
    <property type="project" value="RGD"/>
</dbReference>
<dbReference type="GO" id="GO:0005615">
    <property type="term" value="C:extracellular space"/>
    <property type="evidence" value="ECO:0007669"/>
    <property type="project" value="UniProtKB-KW"/>
</dbReference>
<dbReference type="GO" id="GO:0005886">
    <property type="term" value="C:plasma membrane"/>
    <property type="evidence" value="ECO:0000266"/>
    <property type="project" value="RGD"/>
</dbReference>
<dbReference type="GO" id="GO:0097367">
    <property type="term" value="F:carbohydrate derivative binding"/>
    <property type="evidence" value="ECO:0007669"/>
    <property type="project" value="InterPro"/>
</dbReference>
<dbReference type="GO" id="GO:0005125">
    <property type="term" value="F:cytokine activity"/>
    <property type="evidence" value="ECO:0007669"/>
    <property type="project" value="UniProtKB-KW"/>
</dbReference>
<dbReference type="GO" id="GO:0004347">
    <property type="term" value="F:glucose-6-phosphate isomerase activity"/>
    <property type="evidence" value="ECO:0000314"/>
    <property type="project" value="RGD"/>
</dbReference>
<dbReference type="GO" id="GO:0008083">
    <property type="term" value="F:growth factor activity"/>
    <property type="evidence" value="ECO:0007669"/>
    <property type="project" value="UniProtKB-KW"/>
</dbReference>
<dbReference type="GO" id="GO:0048029">
    <property type="term" value="F:monosaccharide binding"/>
    <property type="evidence" value="ECO:0000353"/>
    <property type="project" value="RGD"/>
</dbReference>
<dbReference type="GO" id="GO:0031625">
    <property type="term" value="F:ubiquitin protein ligase binding"/>
    <property type="evidence" value="ECO:0000266"/>
    <property type="project" value="RGD"/>
</dbReference>
<dbReference type="GO" id="GO:0061621">
    <property type="term" value="P:canonical glycolysis"/>
    <property type="evidence" value="ECO:0007669"/>
    <property type="project" value="Ensembl"/>
</dbReference>
<dbReference type="GO" id="GO:0034101">
    <property type="term" value="P:erythrocyte homeostasis"/>
    <property type="evidence" value="ECO:0000266"/>
    <property type="project" value="RGD"/>
</dbReference>
<dbReference type="GO" id="GO:0006002">
    <property type="term" value="P:fructose 6-phosphate metabolic process"/>
    <property type="evidence" value="ECO:0000266"/>
    <property type="project" value="RGD"/>
</dbReference>
<dbReference type="GO" id="GO:0006094">
    <property type="term" value="P:gluconeogenesis"/>
    <property type="evidence" value="ECO:0000266"/>
    <property type="project" value="RGD"/>
</dbReference>
<dbReference type="GO" id="GO:0051156">
    <property type="term" value="P:glucose 6-phosphate metabolic process"/>
    <property type="evidence" value="ECO:0000314"/>
    <property type="project" value="RGD"/>
</dbReference>
<dbReference type="GO" id="GO:0042593">
    <property type="term" value="P:glucose homeostasis"/>
    <property type="evidence" value="ECO:0000266"/>
    <property type="project" value="RGD"/>
</dbReference>
<dbReference type="GO" id="GO:0006096">
    <property type="term" value="P:glycolytic process"/>
    <property type="evidence" value="ECO:0000266"/>
    <property type="project" value="RGD"/>
</dbReference>
<dbReference type="GO" id="GO:0001701">
    <property type="term" value="P:in utero embryonic development"/>
    <property type="evidence" value="ECO:0000266"/>
    <property type="project" value="RGD"/>
</dbReference>
<dbReference type="GO" id="GO:0007611">
    <property type="term" value="P:learning or memory"/>
    <property type="evidence" value="ECO:0000270"/>
    <property type="project" value="RGD"/>
</dbReference>
<dbReference type="GO" id="GO:0001707">
    <property type="term" value="P:mesoderm formation"/>
    <property type="evidence" value="ECO:0000266"/>
    <property type="project" value="RGD"/>
</dbReference>
<dbReference type="GO" id="GO:0043066">
    <property type="term" value="P:negative regulation of apoptotic process"/>
    <property type="evidence" value="ECO:0000315"/>
    <property type="project" value="RGD"/>
</dbReference>
<dbReference type="GO" id="GO:0010595">
    <property type="term" value="P:positive regulation of endothelial cell migration"/>
    <property type="evidence" value="ECO:0000266"/>
    <property type="project" value="RGD"/>
</dbReference>
<dbReference type="GO" id="GO:0002639">
    <property type="term" value="P:positive regulation of immunoglobulin production"/>
    <property type="evidence" value="ECO:0000266"/>
    <property type="project" value="RGD"/>
</dbReference>
<dbReference type="GO" id="GO:0046686">
    <property type="term" value="P:response to cadmium ion"/>
    <property type="evidence" value="ECO:0000270"/>
    <property type="project" value="RGD"/>
</dbReference>
<dbReference type="GO" id="GO:0032355">
    <property type="term" value="P:response to estradiol"/>
    <property type="evidence" value="ECO:0000270"/>
    <property type="project" value="RGD"/>
</dbReference>
<dbReference type="GO" id="GO:0035902">
    <property type="term" value="P:response to immobilization stress"/>
    <property type="evidence" value="ECO:0000270"/>
    <property type="project" value="RGD"/>
</dbReference>
<dbReference type="GO" id="GO:0035994">
    <property type="term" value="P:response to muscle stretch"/>
    <property type="evidence" value="ECO:0000270"/>
    <property type="project" value="RGD"/>
</dbReference>
<dbReference type="GO" id="GO:0032570">
    <property type="term" value="P:response to progesterone"/>
    <property type="evidence" value="ECO:0000270"/>
    <property type="project" value="RGD"/>
</dbReference>
<dbReference type="GO" id="GO:0033574">
    <property type="term" value="P:response to testosterone"/>
    <property type="evidence" value="ECO:0000270"/>
    <property type="project" value="RGD"/>
</dbReference>
<dbReference type="CDD" id="cd05015">
    <property type="entry name" value="SIS_PGI_1"/>
    <property type="match status" value="1"/>
</dbReference>
<dbReference type="CDD" id="cd05016">
    <property type="entry name" value="SIS_PGI_2"/>
    <property type="match status" value="1"/>
</dbReference>
<dbReference type="FunFam" id="1.10.1390.10:FF:000001">
    <property type="entry name" value="Glucose-6-phosphate isomerase"/>
    <property type="match status" value="1"/>
</dbReference>
<dbReference type="FunFam" id="3.40.50.10490:FF:000004">
    <property type="entry name" value="Glucose-6-phosphate isomerase"/>
    <property type="match status" value="1"/>
</dbReference>
<dbReference type="FunFam" id="3.40.50.10490:FF:000093">
    <property type="entry name" value="Glucose-6-phosphate isomerase"/>
    <property type="match status" value="1"/>
</dbReference>
<dbReference type="Gene3D" id="1.10.1390.10">
    <property type="match status" value="1"/>
</dbReference>
<dbReference type="Gene3D" id="3.40.50.10490">
    <property type="entry name" value="Glucose-6-phosphate isomerase like protein, domain 1"/>
    <property type="match status" value="2"/>
</dbReference>
<dbReference type="HAMAP" id="MF_00473">
    <property type="entry name" value="G6P_isomerase"/>
    <property type="match status" value="1"/>
</dbReference>
<dbReference type="InterPro" id="IPR001672">
    <property type="entry name" value="G6P_Isomerase"/>
</dbReference>
<dbReference type="InterPro" id="IPR023096">
    <property type="entry name" value="G6P_Isomerase_C"/>
</dbReference>
<dbReference type="InterPro" id="IPR018189">
    <property type="entry name" value="Phosphoglucose_isomerase_CS"/>
</dbReference>
<dbReference type="InterPro" id="IPR046348">
    <property type="entry name" value="SIS_dom_sf"/>
</dbReference>
<dbReference type="InterPro" id="IPR035476">
    <property type="entry name" value="SIS_PGI_1"/>
</dbReference>
<dbReference type="InterPro" id="IPR035482">
    <property type="entry name" value="SIS_PGI_2"/>
</dbReference>
<dbReference type="NCBIfam" id="NF001211">
    <property type="entry name" value="PRK00179.1"/>
    <property type="match status" value="1"/>
</dbReference>
<dbReference type="PANTHER" id="PTHR11469">
    <property type="entry name" value="GLUCOSE-6-PHOSPHATE ISOMERASE"/>
    <property type="match status" value="1"/>
</dbReference>
<dbReference type="PANTHER" id="PTHR11469:SF1">
    <property type="entry name" value="GLUCOSE-6-PHOSPHATE ISOMERASE"/>
    <property type="match status" value="1"/>
</dbReference>
<dbReference type="Pfam" id="PF00342">
    <property type="entry name" value="PGI"/>
    <property type="match status" value="1"/>
</dbReference>
<dbReference type="PRINTS" id="PR00662">
    <property type="entry name" value="G6PISOMERASE"/>
</dbReference>
<dbReference type="SUPFAM" id="SSF53697">
    <property type="entry name" value="SIS domain"/>
    <property type="match status" value="1"/>
</dbReference>
<dbReference type="PROSITE" id="PS00765">
    <property type="entry name" value="P_GLUCOSE_ISOMERASE_1"/>
    <property type="match status" value="1"/>
</dbReference>
<dbReference type="PROSITE" id="PS00174">
    <property type="entry name" value="P_GLUCOSE_ISOMERASE_2"/>
    <property type="match status" value="1"/>
</dbReference>
<dbReference type="PROSITE" id="PS51463">
    <property type="entry name" value="P_GLUCOSE_ISOMERASE_3"/>
    <property type="match status" value="1"/>
</dbReference>